<reference key="1">
    <citation type="journal article" date="2010" name="Genome Biol. Evol.">
        <title>Continuing evolution of Burkholderia mallei through genome reduction and large-scale rearrangements.</title>
        <authorList>
            <person name="Losada L."/>
            <person name="Ronning C.M."/>
            <person name="DeShazer D."/>
            <person name="Woods D."/>
            <person name="Fedorova N."/>
            <person name="Kim H.S."/>
            <person name="Shabalina S.A."/>
            <person name="Pearson T.R."/>
            <person name="Brinkac L."/>
            <person name="Tan P."/>
            <person name="Nandi T."/>
            <person name="Crabtree J."/>
            <person name="Badger J."/>
            <person name="Beckstrom-Sternberg S."/>
            <person name="Saqib M."/>
            <person name="Schutzer S.E."/>
            <person name="Keim P."/>
            <person name="Nierman W.C."/>
        </authorList>
    </citation>
    <scope>NUCLEOTIDE SEQUENCE [LARGE SCALE GENOMIC DNA]</scope>
    <source>
        <strain>1710b</strain>
    </source>
</reference>
<gene>
    <name evidence="1" type="primary">mnmC</name>
    <name type="ordered locus">BURPS1710b_0217</name>
</gene>
<evidence type="ECO:0000255" key="1">
    <source>
        <dbReference type="HAMAP-Rule" id="MF_01102"/>
    </source>
</evidence>
<evidence type="ECO:0000305" key="2"/>
<organism>
    <name type="scientific">Burkholderia pseudomallei (strain 1710b)</name>
    <dbReference type="NCBI Taxonomy" id="320372"/>
    <lineage>
        <taxon>Bacteria</taxon>
        <taxon>Pseudomonadati</taxon>
        <taxon>Pseudomonadota</taxon>
        <taxon>Betaproteobacteria</taxon>
        <taxon>Burkholderiales</taxon>
        <taxon>Burkholderiaceae</taxon>
        <taxon>Burkholderia</taxon>
        <taxon>pseudomallei group</taxon>
    </lineage>
</organism>
<accession>Q3JXS0</accession>
<dbReference type="EC" id="2.1.1.61" evidence="1"/>
<dbReference type="EC" id="1.5.-.-" evidence="1"/>
<dbReference type="EMBL" id="CP000124">
    <property type="protein sequence ID" value="ABA49513.1"/>
    <property type="status" value="ALT_INIT"/>
    <property type="molecule type" value="Genomic_DNA"/>
</dbReference>
<dbReference type="RefSeq" id="WP_011325005.1">
    <property type="nucleotide sequence ID" value="NC_007434.1"/>
</dbReference>
<dbReference type="SMR" id="Q3JXS0"/>
<dbReference type="EnsemblBacteria" id="ABA49513">
    <property type="protein sequence ID" value="ABA49513"/>
    <property type="gene ID" value="BURPS1710b_0217"/>
</dbReference>
<dbReference type="KEGG" id="bpm:BURPS1710b_0217"/>
<dbReference type="HOGENOM" id="CLU_022427_1_0_4"/>
<dbReference type="Proteomes" id="UP000002700">
    <property type="component" value="Chromosome I"/>
</dbReference>
<dbReference type="GO" id="GO:0005737">
    <property type="term" value="C:cytoplasm"/>
    <property type="evidence" value="ECO:0007669"/>
    <property type="project" value="UniProtKB-SubCell"/>
</dbReference>
<dbReference type="GO" id="GO:0050660">
    <property type="term" value="F:flavin adenine dinucleotide binding"/>
    <property type="evidence" value="ECO:0007669"/>
    <property type="project" value="UniProtKB-UniRule"/>
</dbReference>
<dbReference type="GO" id="GO:0016645">
    <property type="term" value="F:oxidoreductase activity, acting on the CH-NH group of donors"/>
    <property type="evidence" value="ECO:0007669"/>
    <property type="project" value="InterPro"/>
</dbReference>
<dbReference type="GO" id="GO:0004808">
    <property type="term" value="F:tRNA (5-methylaminomethyl-2-thiouridylate)(34)-methyltransferase activity"/>
    <property type="evidence" value="ECO:0007669"/>
    <property type="project" value="UniProtKB-EC"/>
</dbReference>
<dbReference type="GO" id="GO:0032259">
    <property type="term" value="P:methylation"/>
    <property type="evidence" value="ECO:0007669"/>
    <property type="project" value="UniProtKB-KW"/>
</dbReference>
<dbReference type="GO" id="GO:0002097">
    <property type="term" value="P:tRNA wobble base modification"/>
    <property type="evidence" value="ECO:0007669"/>
    <property type="project" value="UniProtKB-UniRule"/>
</dbReference>
<dbReference type="Gene3D" id="3.30.9.10">
    <property type="entry name" value="D-Amino Acid Oxidase, subunit A, domain 2"/>
    <property type="match status" value="1"/>
</dbReference>
<dbReference type="Gene3D" id="3.50.50.60">
    <property type="entry name" value="FAD/NAD(P)-binding domain"/>
    <property type="match status" value="1"/>
</dbReference>
<dbReference type="Gene3D" id="3.40.50.150">
    <property type="entry name" value="Vaccinia Virus protein VP39"/>
    <property type="match status" value="1"/>
</dbReference>
<dbReference type="HAMAP" id="MF_01102">
    <property type="entry name" value="MnmC"/>
    <property type="match status" value="1"/>
</dbReference>
<dbReference type="InterPro" id="IPR006076">
    <property type="entry name" value="FAD-dep_OxRdtase"/>
</dbReference>
<dbReference type="InterPro" id="IPR036188">
    <property type="entry name" value="FAD/NAD-bd_sf"/>
</dbReference>
<dbReference type="InterPro" id="IPR008471">
    <property type="entry name" value="MnmC-like_methylTransf"/>
</dbReference>
<dbReference type="InterPro" id="IPR029063">
    <property type="entry name" value="SAM-dependent_MTases_sf"/>
</dbReference>
<dbReference type="InterPro" id="IPR023032">
    <property type="entry name" value="tRNA_MAMT_biosynth_bifunc_MnmC"/>
</dbReference>
<dbReference type="InterPro" id="IPR047785">
    <property type="entry name" value="tRNA_MNMC2"/>
</dbReference>
<dbReference type="InterPro" id="IPR017610">
    <property type="entry name" value="tRNA_S-uridine_synth_MnmC_C"/>
</dbReference>
<dbReference type="NCBIfam" id="TIGR03197">
    <property type="entry name" value="MnmC_Cterm"/>
    <property type="match status" value="1"/>
</dbReference>
<dbReference type="NCBIfam" id="NF002481">
    <property type="entry name" value="PRK01747.1-2"/>
    <property type="match status" value="1"/>
</dbReference>
<dbReference type="NCBIfam" id="NF002483">
    <property type="entry name" value="PRK01747.1-4"/>
    <property type="match status" value="1"/>
</dbReference>
<dbReference type="NCBIfam" id="NF033855">
    <property type="entry name" value="tRNA_MNMC2"/>
    <property type="match status" value="1"/>
</dbReference>
<dbReference type="PANTHER" id="PTHR13847">
    <property type="entry name" value="SARCOSINE DEHYDROGENASE-RELATED"/>
    <property type="match status" value="1"/>
</dbReference>
<dbReference type="PANTHER" id="PTHR13847:SF283">
    <property type="entry name" value="TRNA 5-METHYLAMINOMETHYL-2-THIOURIDINE BIOSYNTHESIS BIFUNCTIONAL PROTEIN MNMC"/>
    <property type="match status" value="1"/>
</dbReference>
<dbReference type="Pfam" id="PF01266">
    <property type="entry name" value="DAO"/>
    <property type="match status" value="1"/>
</dbReference>
<dbReference type="Pfam" id="PF05430">
    <property type="entry name" value="Methyltransf_30"/>
    <property type="match status" value="1"/>
</dbReference>
<dbReference type="SUPFAM" id="SSF54373">
    <property type="entry name" value="FAD-linked reductases, C-terminal domain"/>
    <property type="match status" value="1"/>
</dbReference>
<dbReference type="SUPFAM" id="SSF51905">
    <property type="entry name" value="FAD/NAD(P)-binding domain"/>
    <property type="match status" value="1"/>
</dbReference>
<comment type="function">
    <text evidence="1">Catalyzes the last two steps in the biosynthesis of 5-methylaminomethyl-2-thiouridine (mnm(5)s(2)U) at the wobble position (U34) in tRNA. Catalyzes the FAD-dependent demodification of cmnm(5)s(2)U34 to nm(5)s(2)U34, followed by the transfer of a methyl group from S-adenosyl-L-methionine to nm(5)s(2)U34, to form mnm(5)s(2)U34.</text>
</comment>
<comment type="catalytic activity">
    <reaction evidence="1">
        <text>5-aminomethyl-2-thiouridine(34) in tRNA + S-adenosyl-L-methionine = 5-methylaminomethyl-2-thiouridine(34) in tRNA + S-adenosyl-L-homocysteine + H(+)</text>
        <dbReference type="Rhea" id="RHEA:19569"/>
        <dbReference type="Rhea" id="RHEA-COMP:10195"/>
        <dbReference type="Rhea" id="RHEA-COMP:10197"/>
        <dbReference type="ChEBI" id="CHEBI:15378"/>
        <dbReference type="ChEBI" id="CHEBI:57856"/>
        <dbReference type="ChEBI" id="CHEBI:59789"/>
        <dbReference type="ChEBI" id="CHEBI:74454"/>
        <dbReference type="ChEBI" id="CHEBI:74455"/>
        <dbReference type="EC" id="2.1.1.61"/>
    </reaction>
</comment>
<comment type="cofactor">
    <cofactor evidence="1">
        <name>FAD</name>
        <dbReference type="ChEBI" id="CHEBI:57692"/>
    </cofactor>
</comment>
<comment type="subcellular location">
    <subcellularLocation>
        <location evidence="1">Cytoplasm</location>
    </subcellularLocation>
</comment>
<comment type="similarity">
    <text evidence="1">In the N-terminal section; belongs to the methyltransferase superfamily. tRNA (mnm(5)s(2)U34)-methyltransferase family.</text>
</comment>
<comment type="similarity">
    <text evidence="1">In the C-terminal section; belongs to the DAO family.</text>
</comment>
<comment type="sequence caution" evidence="2">
    <conflict type="erroneous initiation">
        <sequence resource="EMBL-CDS" id="ABA49513"/>
    </conflict>
</comment>
<name>MNMC_BURP1</name>
<feature type="chain" id="PRO_0000347961" description="tRNA 5-methylaminomethyl-2-thiouridine biosynthesis bifunctional protein MnmC">
    <location>
        <begin position="1"/>
        <end position="660"/>
    </location>
</feature>
<feature type="region of interest" description="tRNA (mnm(5)s(2)U34)-methyltransferase">
    <location>
        <begin position="1"/>
        <end position="242"/>
    </location>
</feature>
<feature type="region of interest" description="FAD-dependent cmnm(5)s(2)U34 oxidoreductase">
    <location>
        <begin position="266"/>
        <end position="660"/>
    </location>
</feature>
<proteinExistence type="inferred from homology"/>
<sequence>MTDRIVPATLVFREDGTVVSPLYGDIYHSAAGALAQADHVFIRGNGLPERWRHERAFTIIETGFGTGCNFLATWAAWRADPSHCERLHFVSVEKHPFAREDLRRAAAHIVAYTTITTITPIAPLVDELANAWPALTPGVHRLEFDDGRVTLTLVFGDALDVLPNLALRAHAFYLDGFAPSKNADLWSPAIFKSLAKLADERATFATYTSSGAVKRALDEAGFAYRKVDGFAGKRAMLVGEFAPRWRVRRHEPPRAFSTDRRDAIVIGAGLAGCAVVERLAARGWHVTLIERRERIASEASGNPAGVFHPMIARDDNLAARLSRAGFLHALHRWRALERAGHAFSRSTHGLVQLATSDDEFERMRESIDALGVPAELASALSRDDARALLRTDVAHGGWLFAQGGSISPAALAAAQCAAAGDRLSRIVGVEIARLERGGDGRWRALDASGATIAQASVVVVANAADAARIAGLRHAPTQRVRGQLTLLPPGSAPAVPLPVIGDGYVVPLANGVTLTGATYEPDDTDATPREAGHRENLERLERLLPAFSANALDAGALAGRVGFRCVASDRLPLVGELGDEAAAAREAAALTGARLRDVPRATGLYGAFGYGSRGLVWATLGAELIAAQIDGEPWPLERELAEAIDPARFLVRALRHGRVA</sequence>
<keyword id="KW-0963">Cytoplasm</keyword>
<keyword id="KW-0274">FAD</keyword>
<keyword id="KW-0285">Flavoprotein</keyword>
<keyword id="KW-0489">Methyltransferase</keyword>
<keyword id="KW-0511">Multifunctional enzyme</keyword>
<keyword id="KW-0560">Oxidoreductase</keyword>
<keyword id="KW-0949">S-adenosyl-L-methionine</keyword>
<keyword id="KW-0808">Transferase</keyword>
<keyword id="KW-0819">tRNA processing</keyword>
<protein>
    <recommendedName>
        <fullName evidence="1">tRNA 5-methylaminomethyl-2-thiouridine biosynthesis bifunctional protein MnmC</fullName>
        <shortName evidence="1">tRNA mnm(5)s(2)U biosynthesis bifunctional protein</shortName>
    </recommendedName>
    <domain>
        <recommendedName>
            <fullName evidence="1">tRNA (mnm(5)s(2)U34)-methyltransferase</fullName>
            <ecNumber evidence="1">2.1.1.61</ecNumber>
        </recommendedName>
    </domain>
    <domain>
        <recommendedName>
            <fullName evidence="1">FAD-dependent cmnm(5)s(2)U34 oxidoreductase</fullName>
            <ecNumber evidence="1">1.5.-.-</ecNumber>
        </recommendedName>
    </domain>
</protein>